<keyword id="KW-1003">Cell membrane</keyword>
<keyword id="KW-0406">Ion transport</keyword>
<keyword id="KW-0472">Membrane</keyword>
<keyword id="KW-0812">Transmembrane</keyword>
<keyword id="KW-1133">Transmembrane helix</keyword>
<keyword id="KW-0813">Transport</keyword>
<dbReference type="EMBL" id="BA000012">
    <property type="protein sequence ID" value="BAB51054.1"/>
    <property type="molecule type" value="Genomic_DNA"/>
</dbReference>
<dbReference type="SMR" id="Q98E66"/>
<dbReference type="KEGG" id="mlo:mll4386"/>
<dbReference type="eggNOG" id="COG3781">
    <property type="taxonomic scope" value="Bacteria"/>
</dbReference>
<dbReference type="HOGENOM" id="CLU_029790_4_2_5"/>
<dbReference type="Proteomes" id="UP000000552">
    <property type="component" value="Chromosome"/>
</dbReference>
<dbReference type="GO" id="GO:0005886">
    <property type="term" value="C:plasma membrane"/>
    <property type="evidence" value="ECO:0007669"/>
    <property type="project" value="UniProtKB-SubCell"/>
</dbReference>
<dbReference type="GO" id="GO:0005254">
    <property type="term" value="F:chloride channel activity"/>
    <property type="evidence" value="ECO:0007669"/>
    <property type="project" value="InterPro"/>
</dbReference>
<dbReference type="InterPro" id="IPR021134">
    <property type="entry name" value="Bestrophin-like"/>
</dbReference>
<dbReference type="InterPro" id="IPR044669">
    <property type="entry name" value="YneE/VCCN1/2-like"/>
</dbReference>
<dbReference type="PANTHER" id="PTHR33281">
    <property type="entry name" value="UPF0187 PROTEIN YNEE"/>
    <property type="match status" value="1"/>
</dbReference>
<dbReference type="PANTHER" id="PTHR33281:SF19">
    <property type="entry name" value="VOLTAGE-DEPENDENT ANION CHANNEL-FORMING PROTEIN YNEE"/>
    <property type="match status" value="1"/>
</dbReference>
<dbReference type="Pfam" id="PF01062">
    <property type="entry name" value="Bestrophin"/>
    <property type="match status" value="1"/>
</dbReference>
<gene>
    <name type="ordered locus">mll4386</name>
</gene>
<proteinExistence type="inferred from homology"/>
<name>Y4386_RHILO</name>
<evidence type="ECO:0000255" key="1"/>
<evidence type="ECO:0000305" key="2"/>
<sequence>MPVRERPSMIVRPRPNFLQLFFIMRGSVVPRILPQIFGFAVYSAVILALARWFELDLGVFNITPFGLVGVTLSIYLSFRNNAAYDRWWEARKLWGTLVFEIRNLARATTSLIPDPAEQRALLMEALAFCHFLRGQLRKTDSIKDARAFIDAQAETVAGFANPADEMVRRMGRRANAQRRAGDVDPIGFRILDERLASITAIQAGCERIAGTPLPFAYTLLVHRTAYIVCLLLPIGLISTTGWATPLFTALIAYTFFGLDALSEELEDPFGTEANDLALDGLCRVCEISVFEALGEAPPKMLPAEKFYFS</sequence>
<feature type="chain" id="PRO_0000217668" description="Voltage-dependent anion channel-forming protein mll4386">
    <location>
        <begin position="1"/>
        <end position="309"/>
    </location>
</feature>
<feature type="transmembrane region" description="Helical" evidence="1">
    <location>
        <begin position="32"/>
        <end position="52"/>
    </location>
</feature>
<feature type="transmembrane region" description="Helical" evidence="1">
    <location>
        <begin position="58"/>
        <end position="78"/>
    </location>
</feature>
<feature type="transmembrane region" description="Helical" evidence="1">
    <location>
        <begin position="227"/>
        <end position="247"/>
    </location>
</feature>
<organism>
    <name type="scientific">Mesorhizobium japonicum (strain LMG 29417 / CECT 9101 / MAFF 303099)</name>
    <name type="common">Mesorhizobium loti (strain MAFF 303099)</name>
    <dbReference type="NCBI Taxonomy" id="266835"/>
    <lineage>
        <taxon>Bacteria</taxon>
        <taxon>Pseudomonadati</taxon>
        <taxon>Pseudomonadota</taxon>
        <taxon>Alphaproteobacteria</taxon>
        <taxon>Hyphomicrobiales</taxon>
        <taxon>Phyllobacteriaceae</taxon>
        <taxon>Mesorhizobium</taxon>
    </lineage>
</organism>
<protein>
    <recommendedName>
        <fullName>Voltage-dependent anion channel-forming protein mll4386</fullName>
    </recommendedName>
</protein>
<reference key="1">
    <citation type="journal article" date="2000" name="DNA Res.">
        <title>Complete genome structure of the nitrogen-fixing symbiotic bacterium Mesorhizobium loti.</title>
        <authorList>
            <person name="Kaneko T."/>
            <person name="Nakamura Y."/>
            <person name="Sato S."/>
            <person name="Asamizu E."/>
            <person name="Kato T."/>
            <person name="Sasamoto S."/>
            <person name="Watanabe A."/>
            <person name="Idesawa K."/>
            <person name="Ishikawa A."/>
            <person name="Kawashima K."/>
            <person name="Kimura T."/>
            <person name="Kishida Y."/>
            <person name="Kiyokawa C."/>
            <person name="Kohara M."/>
            <person name="Matsumoto M."/>
            <person name="Matsuno A."/>
            <person name="Mochizuki Y."/>
            <person name="Nakayama S."/>
            <person name="Nakazaki N."/>
            <person name="Shimpo S."/>
            <person name="Sugimoto M."/>
            <person name="Takeuchi C."/>
            <person name="Yamada M."/>
            <person name="Tabata S."/>
        </authorList>
    </citation>
    <scope>NUCLEOTIDE SEQUENCE [LARGE SCALE GENOMIC DNA]</scope>
    <source>
        <strain>LMG 29417 / CECT 9101 / MAFF 303099</strain>
    </source>
</reference>
<accession>Q98E66</accession>
<comment type="subcellular location">
    <subcellularLocation>
        <location evidence="1">Cell membrane</location>
        <topology evidence="1">Multi-pass membrane protein</topology>
    </subcellularLocation>
</comment>
<comment type="similarity">
    <text evidence="2">Belongs to the anion channel-forming bestrophin (TC 1.A.46) family.</text>
</comment>